<proteinExistence type="inferred from homology"/>
<dbReference type="EMBL" id="L42023">
    <property type="protein sequence ID" value="AAC23268.1"/>
    <property type="molecule type" value="Genomic_DNA"/>
</dbReference>
<dbReference type="RefSeq" id="NP_439766.1">
    <property type="nucleotide sequence ID" value="NC_000907.1"/>
</dbReference>
<dbReference type="SMR" id="P45277"/>
<dbReference type="STRING" id="71421.HI_1623"/>
<dbReference type="EnsemblBacteria" id="AAC23268">
    <property type="protein sequence ID" value="AAC23268"/>
    <property type="gene ID" value="HI_1623"/>
</dbReference>
<dbReference type="KEGG" id="hin:HI_1623"/>
<dbReference type="PATRIC" id="fig|71421.8.peg.1699"/>
<dbReference type="eggNOG" id="COG0789">
    <property type="taxonomic scope" value="Bacteria"/>
</dbReference>
<dbReference type="HOGENOM" id="CLU_060077_2_0_6"/>
<dbReference type="OrthoDB" id="9808480at2"/>
<dbReference type="PhylomeDB" id="P45277"/>
<dbReference type="BioCyc" id="HINF71421:G1GJ1-1637-MONOMER"/>
<dbReference type="Proteomes" id="UP000000579">
    <property type="component" value="Chromosome"/>
</dbReference>
<dbReference type="GO" id="GO:0003677">
    <property type="term" value="F:DNA binding"/>
    <property type="evidence" value="ECO:0007669"/>
    <property type="project" value="UniProtKB-KW"/>
</dbReference>
<dbReference type="GO" id="GO:0003700">
    <property type="term" value="F:DNA-binding transcription factor activity"/>
    <property type="evidence" value="ECO:0000318"/>
    <property type="project" value="GO_Central"/>
</dbReference>
<dbReference type="GO" id="GO:0046872">
    <property type="term" value="F:metal ion binding"/>
    <property type="evidence" value="ECO:0007669"/>
    <property type="project" value="InterPro"/>
</dbReference>
<dbReference type="GO" id="GO:0045893">
    <property type="term" value="P:positive regulation of DNA-templated transcription"/>
    <property type="evidence" value="ECO:0000318"/>
    <property type="project" value="GO_Central"/>
</dbReference>
<dbReference type="CDD" id="cd04784">
    <property type="entry name" value="HTH_CadR-PbrR"/>
    <property type="match status" value="1"/>
</dbReference>
<dbReference type="Gene3D" id="1.10.1660.10">
    <property type="match status" value="1"/>
</dbReference>
<dbReference type="InterPro" id="IPR011791">
    <property type="entry name" value="CadR-PbrR"/>
</dbReference>
<dbReference type="InterPro" id="IPR009061">
    <property type="entry name" value="DNA-bd_dom_put_sf"/>
</dbReference>
<dbReference type="InterPro" id="IPR000551">
    <property type="entry name" value="MerR-type_HTH_dom"/>
</dbReference>
<dbReference type="InterPro" id="IPR047057">
    <property type="entry name" value="MerR_fam"/>
</dbReference>
<dbReference type="PANTHER" id="PTHR30204:SF92">
    <property type="entry name" value="HTH-TYPE TRANSCRIPTIONAL REGULATOR ZNTR"/>
    <property type="match status" value="1"/>
</dbReference>
<dbReference type="PANTHER" id="PTHR30204">
    <property type="entry name" value="REDOX-CYCLING DRUG-SENSING TRANSCRIPTIONAL ACTIVATOR SOXR"/>
    <property type="match status" value="1"/>
</dbReference>
<dbReference type="Pfam" id="PF13411">
    <property type="entry name" value="MerR_1"/>
    <property type="match status" value="1"/>
</dbReference>
<dbReference type="PRINTS" id="PR00040">
    <property type="entry name" value="HTHMERR"/>
</dbReference>
<dbReference type="SMART" id="SM00422">
    <property type="entry name" value="HTH_MERR"/>
    <property type="match status" value="1"/>
</dbReference>
<dbReference type="SUPFAM" id="SSF46955">
    <property type="entry name" value="Putative DNA-binding domain"/>
    <property type="match status" value="1"/>
</dbReference>
<dbReference type="PROSITE" id="PS00552">
    <property type="entry name" value="HTH_MERR_1"/>
    <property type="match status" value="1"/>
</dbReference>
<dbReference type="PROSITE" id="PS50937">
    <property type="entry name" value="HTH_MERR_2"/>
    <property type="match status" value="1"/>
</dbReference>
<gene>
    <name type="primary">zntR</name>
    <name type="ordered locus">HI_1623</name>
</gene>
<feature type="chain" id="PRO_0000098162" description="HTH-type transcriptional regulator ZntR homolog">
    <location>
        <begin position="1"/>
        <end position="135"/>
    </location>
</feature>
<feature type="domain" description="HTH merR-type" evidence="2">
    <location>
        <begin position="1"/>
        <end position="69"/>
    </location>
</feature>
<feature type="DNA-binding region" description="H-T-H motif" evidence="2">
    <location>
        <begin position="4"/>
        <end position="23"/>
    </location>
</feature>
<sequence length="135" mass="15636">MKIGALAKALGCTVETIRYYEQQGLIPPPKRTSGNFRQYNEEHLQRLSFICNCRNLDISLSEIKSLLNLENASKQQAEEINRVLDKHIKEVATRIHELAHLRMKLIELREKTVSNDEDPMKLLLQHSGVKFVRLK</sequence>
<protein>
    <recommendedName>
        <fullName>HTH-type transcriptional regulator ZntR homolog</fullName>
    </recommendedName>
</protein>
<keyword id="KW-0238">DNA-binding</keyword>
<keyword id="KW-1185">Reference proteome</keyword>
<keyword id="KW-0804">Transcription</keyword>
<keyword id="KW-0805">Transcription regulation</keyword>
<accession>P45277</accession>
<evidence type="ECO:0000250" key="1"/>
<evidence type="ECO:0000255" key="2">
    <source>
        <dbReference type="PROSITE-ProRule" id="PRU00254"/>
    </source>
</evidence>
<comment type="function">
    <text evidence="1">Transcriptional regulator.</text>
</comment>
<name>ZNTR_HAEIN</name>
<reference key="1">
    <citation type="journal article" date="1995" name="Science">
        <title>Whole-genome random sequencing and assembly of Haemophilus influenzae Rd.</title>
        <authorList>
            <person name="Fleischmann R.D."/>
            <person name="Adams M.D."/>
            <person name="White O."/>
            <person name="Clayton R.A."/>
            <person name="Kirkness E.F."/>
            <person name="Kerlavage A.R."/>
            <person name="Bult C.J."/>
            <person name="Tomb J.-F."/>
            <person name="Dougherty B.A."/>
            <person name="Merrick J.M."/>
            <person name="McKenney K."/>
            <person name="Sutton G.G."/>
            <person name="FitzHugh W."/>
            <person name="Fields C.A."/>
            <person name="Gocayne J.D."/>
            <person name="Scott J.D."/>
            <person name="Shirley R."/>
            <person name="Liu L.-I."/>
            <person name="Glodek A."/>
            <person name="Kelley J.M."/>
            <person name="Weidman J.F."/>
            <person name="Phillips C.A."/>
            <person name="Spriggs T."/>
            <person name="Hedblom E."/>
            <person name="Cotton M.D."/>
            <person name="Utterback T.R."/>
            <person name="Hanna M.C."/>
            <person name="Nguyen D.T."/>
            <person name="Saudek D.M."/>
            <person name="Brandon R.C."/>
            <person name="Fine L.D."/>
            <person name="Fritchman J.L."/>
            <person name="Fuhrmann J.L."/>
            <person name="Geoghagen N.S.M."/>
            <person name="Gnehm C.L."/>
            <person name="McDonald L.A."/>
            <person name="Small K.V."/>
            <person name="Fraser C.M."/>
            <person name="Smith H.O."/>
            <person name="Venter J.C."/>
        </authorList>
    </citation>
    <scope>NUCLEOTIDE SEQUENCE [LARGE SCALE GENOMIC DNA]</scope>
    <source>
        <strain>ATCC 51907 / DSM 11121 / KW20 / Rd</strain>
    </source>
</reference>
<organism>
    <name type="scientific">Haemophilus influenzae (strain ATCC 51907 / DSM 11121 / KW20 / Rd)</name>
    <dbReference type="NCBI Taxonomy" id="71421"/>
    <lineage>
        <taxon>Bacteria</taxon>
        <taxon>Pseudomonadati</taxon>
        <taxon>Pseudomonadota</taxon>
        <taxon>Gammaproteobacteria</taxon>
        <taxon>Pasteurellales</taxon>
        <taxon>Pasteurellaceae</taxon>
        <taxon>Haemophilus</taxon>
    </lineage>
</organism>